<comment type="similarity">
    <text evidence="1">Belongs to the bacterial ribosomal protein bL34 family.</text>
</comment>
<name>RL34_BUCAT</name>
<evidence type="ECO:0000255" key="1">
    <source>
        <dbReference type="HAMAP-Rule" id="MF_00391"/>
    </source>
</evidence>
<evidence type="ECO:0000305" key="2"/>
<proteinExistence type="inferred from homology"/>
<keyword id="KW-0687">Ribonucleoprotein</keyword>
<keyword id="KW-0689">Ribosomal protein</keyword>
<reference key="1">
    <citation type="journal article" date="2009" name="Science">
        <title>The dynamics and time scale of ongoing genomic erosion in symbiotic bacteria.</title>
        <authorList>
            <person name="Moran N.A."/>
            <person name="McLaughlin H.J."/>
            <person name="Sorek R."/>
        </authorList>
    </citation>
    <scope>NUCLEOTIDE SEQUENCE [LARGE SCALE GENOMIC DNA]</scope>
    <source>
        <strain>Tuc7</strain>
    </source>
</reference>
<gene>
    <name evidence="1" type="primary">rpmH</name>
    <name type="ordered locus">BUAPTUC7_013</name>
</gene>
<accession>B8D6T2</accession>
<organism>
    <name type="scientific">Buchnera aphidicola subsp. Acyrthosiphon pisum (strain Tuc7)</name>
    <dbReference type="NCBI Taxonomy" id="561501"/>
    <lineage>
        <taxon>Bacteria</taxon>
        <taxon>Pseudomonadati</taxon>
        <taxon>Pseudomonadota</taxon>
        <taxon>Gammaproteobacteria</taxon>
        <taxon>Enterobacterales</taxon>
        <taxon>Erwiniaceae</taxon>
        <taxon>Buchnera</taxon>
    </lineage>
</organism>
<sequence length="47" mass="5675">MKRTFQPSILKRNRSHGFRIRMATKNGRYILSRRRAKLRTRLTVSSK</sequence>
<feature type="chain" id="PRO_1000134431" description="Large ribosomal subunit protein bL34">
    <location>
        <begin position="1"/>
        <end position="47"/>
    </location>
</feature>
<dbReference type="EMBL" id="CP001158">
    <property type="protein sequence ID" value="ACL29847.1"/>
    <property type="molecule type" value="Genomic_DNA"/>
</dbReference>
<dbReference type="RefSeq" id="WP_009873975.1">
    <property type="nucleotide sequence ID" value="NC_011834.1"/>
</dbReference>
<dbReference type="SMR" id="B8D6T2"/>
<dbReference type="KEGG" id="bau:BUAPTUC7_013"/>
<dbReference type="HOGENOM" id="CLU_129938_2_1_6"/>
<dbReference type="GO" id="GO:1990904">
    <property type="term" value="C:ribonucleoprotein complex"/>
    <property type="evidence" value="ECO:0007669"/>
    <property type="project" value="UniProtKB-KW"/>
</dbReference>
<dbReference type="GO" id="GO:0005840">
    <property type="term" value="C:ribosome"/>
    <property type="evidence" value="ECO:0007669"/>
    <property type="project" value="UniProtKB-KW"/>
</dbReference>
<dbReference type="GO" id="GO:0003735">
    <property type="term" value="F:structural constituent of ribosome"/>
    <property type="evidence" value="ECO:0007669"/>
    <property type="project" value="InterPro"/>
</dbReference>
<dbReference type="GO" id="GO:0006412">
    <property type="term" value="P:translation"/>
    <property type="evidence" value="ECO:0007669"/>
    <property type="project" value="UniProtKB-UniRule"/>
</dbReference>
<dbReference type="FunFam" id="1.10.287.3980:FF:000001">
    <property type="entry name" value="Mitochondrial ribosomal protein L34"/>
    <property type="match status" value="1"/>
</dbReference>
<dbReference type="Gene3D" id="1.10.287.3980">
    <property type="match status" value="1"/>
</dbReference>
<dbReference type="HAMAP" id="MF_00391">
    <property type="entry name" value="Ribosomal_bL34"/>
    <property type="match status" value="1"/>
</dbReference>
<dbReference type="InterPro" id="IPR000271">
    <property type="entry name" value="Ribosomal_bL34"/>
</dbReference>
<dbReference type="InterPro" id="IPR020939">
    <property type="entry name" value="Ribosomal_bL34_CS"/>
</dbReference>
<dbReference type="NCBIfam" id="TIGR01030">
    <property type="entry name" value="rpmH_bact"/>
    <property type="match status" value="1"/>
</dbReference>
<dbReference type="PANTHER" id="PTHR14503:SF4">
    <property type="entry name" value="LARGE RIBOSOMAL SUBUNIT PROTEIN BL34M"/>
    <property type="match status" value="1"/>
</dbReference>
<dbReference type="PANTHER" id="PTHR14503">
    <property type="entry name" value="MITOCHONDRIAL RIBOSOMAL PROTEIN 34 FAMILY MEMBER"/>
    <property type="match status" value="1"/>
</dbReference>
<dbReference type="Pfam" id="PF00468">
    <property type="entry name" value="Ribosomal_L34"/>
    <property type="match status" value="1"/>
</dbReference>
<dbReference type="PROSITE" id="PS00784">
    <property type="entry name" value="RIBOSOMAL_L34"/>
    <property type="match status" value="1"/>
</dbReference>
<protein>
    <recommendedName>
        <fullName evidence="1">Large ribosomal subunit protein bL34</fullName>
    </recommendedName>
    <alternativeName>
        <fullName evidence="2">50S ribosomal protein L34</fullName>
    </alternativeName>
</protein>